<sequence>MQIILLEKVANLGVLGDVVKVKDGYARNYLIPQGKAKRATQSNMAQFEALRAELERAHAEKLAEAQAIATKLEGLMVQISRKAGMDGRLFGSVSNIDIVDALETQGFKVERSAVRMPEGPIKQVGDSQVDVALHSDIVVPITVSVLGEQQ</sequence>
<protein>
    <recommendedName>
        <fullName evidence="1">Large ribosomal subunit protein bL9</fullName>
    </recommendedName>
    <alternativeName>
        <fullName evidence="2">50S ribosomal protein L9</fullName>
    </alternativeName>
</protein>
<keyword id="KW-1185">Reference proteome</keyword>
<keyword id="KW-0687">Ribonucleoprotein</keyword>
<keyword id="KW-0689">Ribosomal protein</keyword>
<keyword id="KW-0694">RNA-binding</keyword>
<keyword id="KW-0699">rRNA-binding</keyword>
<organism>
    <name type="scientific">Aromatoleum aromaticum (strain DSM 19018 / LMG 30748 / EbN1)</name>
    <name type="common">Azoarcus sp. (strain EbN1)</name>
    <dbReference type="NCBI Taxonomy" id="76114"/>
    <lineage>
        <taxon>Bacteria</taxon>
        <taxon>Pseudomonadati</taxon>
        <taxon>Pseudomonadota</taxon>
        <taxon>Betaproteobacteria</taxon>
        <taxon>Rhodocyclales</taxon>
        <taxon>Rhodocyclaceae</taxon>
        <taxon>Aromatoleum</taxon>
    </lineage>
</organism>
<gene>
    <name evidence="1" type="primary">rplI</name>
    <name type="ordered locus">AZOSEA23170</name>
    <name type="ORF">ebA4078</name>
</gene>
<comment type="function">
    <text evidence="1">Binds to the 23S rRNA.</text>
</comment>
<comment type="similarity">
    <text evidence="1">Belongs to the bacterial ribosomal protein bL9 family.</text>
</comment>
<name>RL9_AROAE</name>
<evidence type="ECO:0000255" key="1">
    <source>
        <dbReference type="HAMAP-Rule" id="MF_00503"/>
    </source>
</evidence>
<evidence type="ECO:0000305" key="2"/>
<dbReference type="EMBL" id="CR555306">
    <property type="protein sequence ID" value="CAI08442.1"/>
    <property type="molecule type" value="Genomic_DNA"/>
</dbReference>
<dbReference type="RefSeq" id="WP_011238129.1">
    <property type="nucleotide sequence ID" value="NC_006513.1"/>
</dbReference>
<dbReference type="SMR" id="Q5P2M2"/>
<dbReference type="STRING" id="76114.ebA4078"/>
<dbReference type="KEGG" id="eba:ebA4078"/>
<dbReference type="eggNOG" id="COG0359">
    <property type="taxonomic scope" value="Bacteria"/>
</dbReference>
<dbReference type="HOGENOM" id="CLU_078938_4_1_4"/>
<dbReference type="OrthoDB" id="9788336at2"/>
<dbReference type="Proteomes" id="UP000006552">
    <property type="component" value="Chromosome"/>
</dbReference>
<dbReference type="GO" id="GO:1990904">
    <property type="term" value="C:ribonucleoprotein complex"/>
    <property type="evidence" value="ECO:0007669"/>
    <property type="project" value="UniProtKB-KW"/>
</dbReference>
<dbReference type="GO" id="GO:0005840">
    <property type="term" value="C:ribosome"/>
    <property type="evidence" value="ECO:0007669"/>
    <property type="project" value="UniProtKB-KW"/>
</dbReference>
<dbReference type="GO" id="GO:0019843">
    <property type="term" value="F:rRNA binding"/>
    <property type="evidence" value="ECO:0007669"/>
    <property type="project" value="UniProtKB-UniRule"/>
</dbReference>
<dbReference type="GO" id="GO:0003735">
    <property type="term" value="F:structural constituent of ribosome"/>
    <property type="evidence" value="ECO:0007669"/>
    <property type="project" value="InterPro"/>
</dbReference>
<dbReference type="GO" id="GO:0006412">
    <property type="term" value="P:translation"/>
    <property type="evidence" value="ECO:0007669"/>
    <property type="project" value="UniProtKB-UniRule"/>
</dbReference>
<dbReference type="Gene3D" id="3.10.430.100">
    <property type="entry name" value="Ribosomal protein L9, C-terminal domain"/>
    <property type="match status" value="1"/>
</dbReference>
<dbReference type="Gene3D" id="3.40.5.10">
    <property type="entry name" value="Ribosomal protein L9, N-terminal domain"/>
    <property type="match status" value="1"/>
</dbReference>
<dbReference type="HAMAP" id="MF_00503">
    <property type="entry name" value="Ribosomal_bL9"/>
    <property type="match status" value="1"/>
</dbReference>
<dbReference type="InterPro" id="IPR000244">
    <property type="entry name" value="Ribosomal_bL9"/>
</dbReference>
<dbReference type="InterPro" id="IPR009027">
    <property type="entry name" value="Ribosomal_bL9/RNase_H1_N"/>
</dbReference>
<dbReference type="InterPro" id="IPR020594">
    <property type="entry name" value="Ribosomal_bL9_bac/chp"/>
</dbReference>
<dbReference type="InterPro" id="IPR020069">
    <property type="entry name" value="Ribosomal_bL9_C"/>
</dbReference>
<dbReference type="InterPro" id="IPR036791">
    <property type="entry name" value="Ribosomal_bL9_C_sf"/>
</dbReference>
<dbReference type="InterPro" id="IPR020070">
    <property type="entry name" value="Ribosomal_bL9_N"/>
</dbReference>
<dbReference type="InterPro" id="IPR036935">
    <property type="entry name" value="Ribosomal_bL9_N_sf"/>
</dbReference>
<dbReference type="NCBIfam" id="TIGR00158">
    <property type="entry name" value="L9"/>
    <property type="match status" value="1"/>
</dbReference>
<dbReference type="PANTHER" id="PTHR21368">
    <property type="entry name" value="50S RIBOSOMAL PROTEIN L9"/>
    <property type="match status" value="1"/>
</dbReference>
<dbReference type="Pfam" id="PF03948">
    <property type="entry name" value="Ribosomal_L9_C"/>
    <property type="match status" value="1"/>
</dbReference>
<dbReference type="Pfam" id="PF01281">
    <property type="entry name" value="Ribosomal_L9_N"/>
    <property type="match status" value="1"/>
</dbReference>
<dbReference type="SUPFAM" id="SSF55658">
    <property type="entry name" value="L9 N-domain-like"/>
    <property type="match status" value="1"/>
</dbReference>
<dbReference type="SUPFAM" id="SSF55653">
    <property type="entry name" value="Ribosomal protein L9 C-domain"/>
    <property type="match status" value="1"/>
</dbReference>
<dbReference type="PROSITE" id="PS00651">
    <property type="entry name" value="RIBOSOMAL_L9"/>
    <property type="match status" value="1"/>
</dbReference>
<proteinExistence type="inferred from homology"/>
<reference key="1">
    <citation type="journal article" date="2005" name="Arch. Microbiol.">
        <title>The genome sequence of an anaerobic aromatic-degrading denitrifying bacterium, strain EbN1.</title>
        <authorList>
            <person name="Rabus R."/>
            <person name="Kube M."/>
            <person name="Heider J."/>
            <person name="Beck A."/>
            <person name="Heitmann K."/>
            <person name="Widdel F."/>
            <person name="Reinhardt R."/>
        </authorList>
    </citation>
    <scope>NUCLEOTIDE SEQUENCE [LARGE SCALE GENOMIC DNA]</scope>
    <source>
        <strain>DSM 19018 / LMG 30748 / EbN1</strain>
    </source>
</reference>
<accession>Q5P2M2</accession>
<feature type="chain" id="PRO_0000236472" description="Large ribosomal subunit protein bL9">
    <location>
        <begin position="1"/>
        <end position="150"/>
    </location>
</feature>